<keyword id="KW-0963">Cytoplasm</keyword>
<keyword id="KW-0448">Lipopolysaccharide biosynthesis</keyword>
<keyword id="KW-1185">Reference proteome</keyword>
<keyword id="KW-0808">Transferase</keyword>
<gene>
    <name evidence="1" type="primary">kdsA</name>
    <name type="ordered locus">Ssed_3450</name>
</gene>
<reference key="1">
    <citation type="submission" date="2007-08" db="EMBL/GenBank/DDBJ databases">
        <title>Complete sequence of Shewanella sediminis HAW-EB3.</title>
        <authorList>
            <consortium name="US DOE Joint Genome Institute"/>
            <person name="Copeland A."/>
            <person name="Lucas S."/>
            <person name="Lapidus A."/>
            <person name="Barry K."/>
            <person name="Glavina del Rio T."/>
            <person name="Dalin E."/>
            <person name="Tice H."/>
            <person name="Pitluck S."/>
            <person name="Chertkov O."/>
            <person name="Brettin T."/>
            <person name="Bruce D."/>
            <person name="Detter J.C."/>
            <person name="Han C."/>
            <person name="Schmutz J."/>
            <person name="Larimer F."/>
            <person name="Land M."/>
            <person name="Hauser L."/>
            <person name="Kyrpides N."/>
            <person name="Kim E."/>
            <person name="Zhao J.-S."/>
            <person name="Richardson P."/>
        </authorList>
    </citation>
    <scope>NUCLEOTIDE SEQUENCE [LARGE SCALE GENOMIC DNA]</scope>
    <source>
        <strain>HAW-EB3</strain>
    </source>
</reference>
<proteinExistence type="inferred from homology"/>
<name>KDSA_SHESH</name>
<comment type="catalytic activity">
    <reaction evidence="1">
        <text>D-arabinose 5-phosphate + phosphoenolpyruvate + H2O = 3-deoxy-alpha-D-manno-2-octulosonate-8-phosphate + phosphate</text>
        <dbReference type="Rhea" id="RHEA:14053"/>
        <dbReference type="ChEBI" id="CHEBI:15377"/>
        <dbReference type="ChEBI" id="CHEBI:43474"/>
        <dbReference type="ChEBI" id="CHEBI:57693"/>
        <dbReference type="ChEBI" id="CHEBI:58702"/>
        <dbReference type="ChEBI" id="CHEBI:85985"/>
        <dbReference type="EC" id="2.5.1.55"/>
    </reaction>
</comment>
<comment type="pathway">
    <text evidence="1">Carbohydrate biosynthesis; 3-deoxy-D-manno-octulosonate biosynthesis; 3-deoxy-D-manno-octulosonate from D-ribulose 5-phosphate: step 2/3.</text>
</comment>
<comment type="pathway">
    <text evidence="1">Bacterial outer membrane biogenesis; lipopolysaccharide biosynthesis.</text>
</comment>
<comment type="subcellular location">
    <subcellularLocation>
        <location evidence="1">Cytoplasm</location>
    </subcellularLocation>
</comment>
<comment type="similarity">
    <text evidence="1">Belongs to the KdsA family.</text>
</comment>
<dbReference type="EC" id="2.5.1.55" evidence="1"/>
<dbReference type="EMBL" id="CP000821">
    <property type="protein sequence ID" value="ABV38054.1"/>
    <property type="molecule type" value="Genomic_DNA"/>
</dbReference>
<dbReference type="RefSeq" id="WP_012143784.1">
    <property type="nucleotide sequence ID" value="NC_009831.1"/>
</dbReference>
<dbReference type="SMR" id="A8FYY1"/>
<dbReference type="STRING" id="425104.Ssed_3450"/>
<dbReference type="KEGG" id="sse:Ssed_3450"/>
<dbReference type="eggNOG" id="COG2877">
    <property type="taxonomic scope" value="Bacteria"/>
</dbReference>
<dbReference type="HOGENOM" id="CLU_036666_0_0_6"/>
<dbReference type="OrthoDB" id="9776934at2"/>
<dbReference type="UniPathway" id="UPA00030"/>
<dbReference type="UniPathway" id="UPA00357">
    <property type="reaction ID" value="UER00474"/>
</dbReference>
<dbReference type="Proteomes" id="UP000002015">
    <property type="component" value="Chromosome"/>
</dbReference>
<dbReference type="GO" id="GO:0005737">
    <property type="term" value="C:cytoplasm"/>
    <property type="evidence" value="ECO:0007669"/>
    <property type="project" value="UniProtKB-SubCell"/>
</dbReference>
<dbReference type="GO" id="GO:0008676">
    <property type="term" value="F:3-deoxy-8-phosphooctulonate synthase activity"/>
    <property type="evidence" value="ECO:0007669"/>
    <property type="project" value="UniProtKB-UniRule"/>
</dbReference>
<dbReference type="GO" id="GO:0019294">
    <property type="term" value="P:keto-3-deoxy-D-manno-octulosonic acid biosynthetic process"/>
    <property type="evidence" value="ECO:0007669"/>
    <property type="project" value="UniProtKB-UniRule"/>
</dbReference>
<dbReference type="Gene3D" id="3.20.20.70">
    <property type="entry name" value="Aldolase class I"/>
    <property type="match status" value="1"/>
</dbReference>
<dbReference type="HAMAP" id="MF_00056">
    <property type="entry name" value="KDO8P_synth"/>
    <property type="match status" value="1"/>
</dbReference>
<dbReference type="InterPro" id="IPR013785">
    <property type="entry name" value="Aldolase_TIM"/>
</dbReference>
<dbReference type="InterPro" id="IPR006218">
    <property type="entry name" value="DAHP1/KDSA"/>
</dbReference>
<dbReference type="InterPro" id="IPR006269">
    <property type="entry name" value="KDO8P_synthase"/>
</dbReference>
<dbReference type="NCBIfam" id="TIGR01362">
    <property type="entry name" value="KDO8P_synth"/>
    <property type="match status" value="1"/>
</dbReference>
<dbReference type="NCBIfam" id="NF003543">
    <property type="entry name" value="PRK05198.1"/>
    <property type="match status" value="1"/>
</dbReference>
<dbReference type="NCBIfam" id="NF009109">
    <property type="entry name" value="PRK12457.1"/>
    <property type="match status" value="1"/>
</dbReference>
<dbReference type="PANTHER" id="PTHR21057">
    <property type="entry name" value="PHOSPHO-2-DEHYDRO-3-DEOXYHEPTONATE ALDOLASE"/>
    <property type="match status" value="1"/>
</dbReference>
<dbReference type="Pfam" id="PF00793">
    <property type="entry name" value="DAHP_synth_1"/>
    <property type="match status" value="1"/>
</dbReference>
<dbReference type="SUPFAM" id="SSF51569">
    <property type="entry name" value="Aldolase"/>
    <property type="match status" value="1"/>
</dbReference>
<protein>
    <recommendedName>
        <fullName evidence="1">2-dehydro-3-deoxyphosphooctonate aldolase</fullName>
        <ecNumber evidence="1">2.5.1.55</ecNumber>
    </recommendedName>
    <alternativeName>
        <fullName evidence="1">3-deoxy-D-manno-octulosonic acid 8-phosphate synthase</fullName>
    </alternativeName>
    <alternativeName>
        <fullName evidence="1">KDO-8-phosphate synthase</fullName>
        <shortName evidence="1">KDO 8-P synthase</shortName>
        <shortName evidence="1">KDOPS</shortName>
    </alternativeName>
    <alternativeName>
        <fullName evidence="1">Phospho-2-dehydro-3-deoxyoctonate aldolase</fullName>
    </alternativeName>
</protein>
<feature type="chain" id="PRO_1000074992" description="2-dehydro-3-deoxyphosphooctonate aldolase">
    <location>
        <begin position="1"/>
        <end position="282"/>
    </location>
</feature>
<evidence type="ECO:0000255" key="1">
    <source>
        <dbReference type="HAMAP-Rule" id="MF_00056"/>
    </source>
</evidence>
<sequence length="282" mass="30784">MSNKIIGLGSIEIANDKPFVLFGGMNVLESRDLAMKIAETYAEVTQKLGIPYVFKASFDKANRSSVNSYRGPGMEEGLKIFEEIKSTFNLPLITDVHEVHQCAPVAEVVDIIQLPAFLARQTDLVVAMAKTDAIINVKKPQFLAPHEMRHIITKFNEAGNDKIILCERGSSFGYNNLVVDMLGMDEMKQSGYPVIFDATHALQRPGGRSDSAGGRRAQATELARSGMALGLAGLFIEAHPDPDNAKCDGPCALPLHQLEAYLTQMKAVDDLVKSFDAIDTSK</sequence>
<organism>
    <name type="scientific">Shewanella sediminis (strain HAW-EB3)</name>
    <dbReference type="NCBI Taxonomy" id="425104"/>
    <lineage>
        <taxon>Bacteria</taxon>
        <taxon>Pseudomonadati</taxon>
        <taxon>Pseudomonadota</taxon>
        <taxon>Gammaproteobacteria</taxon>
        <taxon>Alteromonadales</taxon>
        <taxon>Shewanellaceae</taxon>
        <taxon>Shewanella</taxon>
    </lineage>
</organism>
<accession>A8FYY1</accession>